<protein>
    <recommendedName>
        <fullName evidence="1">Elongation factor 4</fullName>
        <shortName evidence="1">EF-4</shortName>
        <ecNumber evidence="1">3.6.5.n1</ecNumber>
    </recommendedName>
    <alternativeName>
        <fullName evidence="1">Ribosomal back-translocase LepA</fullName>
    </alternativeName>
</protein>
<dbReference type="EC" id="3.6.5.n1" evidence="1"/>
<dbReference type="EMBL" id="CP000027">
    <property type="protein sequence ID" value="AAW39867.1"/>
    <property type="molecule type" value="Genomic_DNA"/>
</dbReference>
<dbReference type="RefSeq" id="WP_010936586.1">
    <property type="nucleotide sequence ID" value="NC_002936.3"/>
</dbReference>
<dbReference type="SMR" id="Q3Z864"/>
<dbReference type="FunCoup" id="Q3Z864">
    <property type="interactions" value="311"/>
</dbReference>
<dbReference type="STRING" id="243164.DET0859"/>
<dbReference type="GeneID" id="3229829"/>
<dbReference type="KEGG" id="det:DET0859"/>
<dbReference type="eggNOG" id="COG0481">
    <property type="taxonomic scope" value="Bacteria"/>
</dbReference>
<dbReference type="HOGENOM" id="CLU_009995_3_3_0"/>
<dbReference type="InParanoid" id="Q3Z864"/>
<dbReference type="Proteomes" id="UP000008289">
    <property type="component" value="Chromosome"/>
</dbReference>
<dbReference type="GO" id="GO:0005886">
    <property type="term" value="C:plasma membrane"/>
    <property type="evidence" value="ECO:0007669"/>
    <property type="project" value="UniProtKB-SubCell"/>
</dbReference>
<dbReference type="GO" id="GO:0005525">
    <property type="term" value="F:GTP binding"/>
    <property type="evidence" value="ECO:0007669"/>
    <property type="project" value="UniProtKB-UniRule"/>
</dbReference>
<dbReference type="GO" id="GO:0003924">
    <property type="term" value="F:GTPase activity"/>
    <property type="evidence" value="ECO:0007669"/>
    <property type="project" value="UniProtKB-UniRule"/>
</dbReference>
<dbReference type="GO" id="GO:0043022">
    <property type="term" value="F:ribosome binding"/>
    <property type="evidence" value="ECO:0007669"/>
    <property type="project" value="UniProtKB-UniRule"/>
</dbReference>
<dbReference type="GO" id="GO:0003746">
    <property type="term" value="F:translation elongation factor activity"/>
    <property type="evidence" value="ECO:0007669"/>
    <property type="project" value="UniProtKB-UniRule"/>
</dbReference>
<dbReference type="GO" id="GO:0045727">
    <property type="term" value="P:positive regulation of translation"/>
    <property type="evidence" value="ECO:0007669"/>
    <property type="project" value="UniProtKB-UniRule"/>
</dbReference>
<dbReference type="CDD" id="cd03699">
    <property type="entry name" value="EF4_II"/>
    <property type="match status" value="1"/>
</dbReference>
<dbReference type="CDD" id="cd16260">
    <property type="entry name" value="EF4_III"/>
    <property type="match status" value="1"/>
</dbReference>
<dbReference type="CDD" id="cd01890">
    <property type="entry name" value="LepA"/>
    <property type="match status" value="1"/>
</dbReference>
<dbReference type="CDD" id="cd03709">
    <property type="entry name" value="lepA_C"/>
    <property type="match status" value="1"/>
</dbReference>
<dbReference type="FunFam" id="3.40.50.300:FF:000078">
    <property type="entry name" value="Elongation factor 4"/>
    <property type="match status" value="1"/>
</dbReference>
<dbReference type="FunFam" id="2.40.30.10:FF:000015">
    <property type="entry name" value="Translation factor GUF1, mitochondrial"/>
    <property type="match status" value="1"/>
</dbReference>
<dbReference type="FunFam" id="3.30.70.2570:FF:000001">
    <property type="entry name" value="Translation factor GUF1, mitochondrial"/>
    <property type="match status" value="1"/>
</dbReference>
<dbReference type="FunFam" id="3.30.70.870:FF:000004">
    <property type="entry name" value="Translation factor GUF1, mitochondrial"/>
    <property type="match status" value="1"/>
</dbReference>
<dbReference type="Gene3D" id="3.30.70.240">
    <property type="match status" value="1"/>
</dbReference>
<dbReference type="Gene3D" id="3.30.70.2570">
    <property type="entry name" value="Elongation factor 4, C-terminal domain"/>
    <property type="match status" value="1"/>
</dbReference>
<dbReference type="Gene3D" id="3.30.70.870">
    <property type="entry name" value="Elongation Factor G (Translational Gtpase), domain 3"/>
    <property type="match status" value="1"/>
</dbReference>
<dbReference type="Gene3D" id="3.40.50.300">
    <property type="entry name" value="P-loop containing nucleotide triphosphate hydrolases"/>
    <property type="match status" value="1"/>
</dbReference>
<dbReference type="Gene3D" id="2.40.30.10">
    <property type="entry name" value="Translation factors"/>
    <property type="match status" value="1"/>
</dbReference>
<dbReference type="HAMAP" id="MF_00071">
    <property type="entry name" value="LepA"/>
    <property type="match status" value="1"/>
</dbReference>
<dbReference type="InterPro" id="IPR006297">
    <property type="entry name" value="EF-4"/>
</dbReference>
<dbReference type="InterPro" id="IPR035647">
    <property type="entry name" value="EFG_III/V"/>
</dbReference>
<dbReference type="InterPro" id="IPR000640">
    <property type="entry name" value="EFG_V-like"/>
</dbReference>
<dbReference type="InterPro" id="IPR031157">
    <property type="entry name" value="G_TR_CS"/>
</dbReference>
<dbReference type="InterPro" id="IPR038363">
    <property type="entry name" value="LepA_C_sf"/>
</dbReference>
<dbReference type="InterPro" id="IPR013842">
    <property type="entry name" value="LepA_CTD"/>
</dbReference>
<dbReference type="InterPro" id="IPR035654">
    <property type="entry name" value="LepA_IV"/>
</dbReference>
<dbReference type="InterPro" id="IPR027417">
    <property type="entry name" value="P-loop_NTPase"/>
</dbReference>
<dbReference type="InterPro" id="IPR005225">
    <property type="entry name" value="Small_GTP-bd"/>
</dbReference>
<dbReference type="InterPro" id="IPR000795">
    <property type="entry name" value="T_Tr_GTP-bd_dom"/>
</dbReference>
<dbReference type="InterPro" id="IPR009000">
    <property type="entry name" value="Transl_B-barrel_sf"/>
</dbReference>
<dbReference type="NCBIfam" id="TIGR01393">
    <property type="entry name" value="lepA"/>
    <property type="match status" value="1"/>
</dbReference>
<dbReference type="NCBIfam" id="TIGR00231">
    <property type="entry name" value="small_GTP"/>
    <property type="match status" value="1"/>
</dbReference>
<dbReference type="PANTHER" id="PTHR43512:SF4">
    <property type="entry name" value="TRANSLATION FACTOR GUF1 HOMOLOG, CHLOROPLASTIC"/>
    <property type="match status" value="1"/>
</dbReference>
<dbReference type="PANTHER" id="PTHR43512">
    <property type="entry name" value="TRANSLATION FACTOR GUF1-RELATED"/>
    <property type="match status" value="1"/>
</dbReference>
<dbReference type="Pfam" id="PF00679">
    <property type="entry name" value="EFG_C"/>
    <property type="match status" value="1"/>
</dbReference>
<dbReference type="Pfam" id="PF00009">
    <property type="entry name" value="GTP_EFTU"/>
    <property type="match status" value="1"/>
</dbReference>
<dbReference type="Pfam" id="PF06421">
    <property type="entry name" value="LepA_C"/>
    <property type="match status" value="1"/>
</dbReference>
<dbReference type="PRINTS" id="PR00315">
    <property type="entry name" value="ELONGATNFCT"/>
</dbReference>
<dbReference type="SUPFAM" id="SSF54980">
    <property type="entry name" value="EF-G C-terminal domain-like"/>
    <property type="match status" value="2"/>
</dbReference>
<dbReference type="SUPFAM" id="SSF52540">
    <property type="entry name" value="P-loop containing nucleoside triphosphate hydrolases"/>
    <property type="match status" value="1"/>
</dbReference>
<dbReference type="SUPFAM" id="SSF50447">
    <property type="entry name" value="Translation proteins"/>
    <property type="match status" value="1"/>
</dbReference>
<dbReference type="PROSITE" id="PS00301">
    <property type="entry name" value="G_TR_1"/>
    <property type="match status" value="1"/>
</dbReference>
<dbReference type="PROSITE" id="PS51722">
    <property type="entry name" value="G_TR_2"/>
    <property type="match status" value="1"/>
</dbReference>
<accession>Q3Z864</accession>
<gene>
    <name evidence="1" type="primary">lepA</name>
    <name type="ordered locus">DET0859</name>
</gene>
<organism>
    <name type="scientific">Dehalococcoides mccartyi (strain ATCC BAA-2266 / KCTC 15142 / 195)</name>
    <name type="common">Dehalococcoides ethenogenes (strain 195)</name>
    <dbReference type="NCBI Taxonomy" id="243164"/>
    <lineage>
        <taxon>Bacteria</taxon>
        <taxon>Bacillati</taxon>
        <taxon>Chloroflexota</taxon>
        <taxon>Dehalococcoidia</taxon>
        <taxon>Dehalococcoidales</taxon>
        <taxon>Dehalococcoidaceae</taxon>
        <taxon>Dehalococcoides</taxon>
    </lineage>
</organism>
<proteinExistence type="inferred from homology"/>
<reference key="1">
    <citation type="journal article" date="2005" name="Science">
        <title>Genome sequence of the PCE-dechlorinating bacterium Dehalococcoides ethenogenes.</title>
        <authorList>
            <person name="Seshadri R."/>
            <person name="Adrian L."/>
            <person name="Fouts D.E."/>
            <person name="Eisen J.A."/>
            <person name="Phillippy A.M."/>
            <person name="Methe B.A."/>
            <person name="Ward N.L."/>
            <person name="Nelson W.C."/>
            <person name="DeBoy R.T."/>
            <person name="Khouri H.M."/>
            <person name="Kolonay J.F."/>
            <person name="Dodson R.J."/>
            <person name="Daugherty S.C."/>
            <person name="Brinkac L.M."/>
            <person name="Sullivan S.A."/>
            <person name="Madupu R."/>
            <person name="Nelson K.E."/>
            <person name="Kang K.H."/>
            <person name="Impraim M."/>
            <person name="Tran K."/>
            <person name="Robinson J.M."/>
            <person name="Forberger H.A."/>
            <person name="Fraser C.M."/>
            <person name="Zinder S.H."/>
            <person name="Heidelberg J.F."/>
        </authorList>
    </citation>
    <scope>NUCLEOTIDE SEQUENCE [LARGE SCALE GENOMIC DNA]</scope>
    <source>
        <strain>ATCC BAA-2266 / KCTC 15142 / 195</strain>
    </source>
</reference>
<evidence type="ECO:0000255" key="1">
    <source>
        <dbReference type="HAMAP-Rule" id="MF_00071"/>
    </source>
</evidence>
<name>LEPA_DEHM1</name>
<keyword id="KW-1003">Cell membrane</keyword>
<keyword id="KW-0342">GTP-binding</keyword>
<keyword id="KW-0378">Hydrolase</keyword>
<keyword id="KW-0472">Membrane</keyword>
<keyword id="KW-0547">Nucleotide-binding</keyword>
<keyword id="KW-0648">Protein biosynthesis</keyword>
<comment type="function">
    <text evidence="1">Required for accurate and efficient protein synthesis under certain stress conditions. May act as a fidelity factor of the translation reaction, by catalyzing a one-codon backward translocation of tRNAs on improperly translocated ribosomes. Back-translocation proceeds from a post-translocation (POST) complex to a pre-translocation (PRE) complex, thus giving elongation factor G a second chance to translocate the tRNAs correctly. Binds to ribosomes in a GTP-dependent manner.</text>
</comment>
<comment type="catalytic activity">
    <reaction evidence="1">
        <text>GTP + H2O = GDP + phosphate + H(+)</text>
        <dbReference type="Rhea" id="RHEA:19669"/>
        <dbReference type="ChEBI" id="CHEBI:15377"/>
        <dbReference type="ChEBI" id="CHEBI:15378"/>
        <dbReference type="ChEBI" id="CHEBI:37565"/>
        <dbReference type="ChEBI" id="CHEBI:43474"/>
        <dbReference type="ChEBI" id="CHEBI:58189"/>
        <dbReference type="EC" id="3.6.5.n1"/>
    </reaction>
</comment>
<comment type="subcellular location">
    <subcellularLocation>
        <location evidence="1">Cell membrane</location>
        <topology evidence="1">Peripheral membrane protein</topology>
        <orientation evidence="1">Cytoplasmic side</orientation>
    </subcellularLocation>
</comment>
<comment type="similarity">
    <text evidence="1">Belongs to the TRAFAC class translation factor GTPase superfamily. Classic translation factor GTPase family. LepA subfamily.</text>
</comment>
<feature type="chain" id="PRO_0000224756" description="Elongation factor 4">
    <location>
        <begin position="1"/>
        <end position="605"/>
    </location>
</feature>
<feature type="domain" description="tr-type G">
    <location>
        <begin position="4"/>
        <end position="186"/>
    </location>
</feature>
<feature type="binding site" evidence="1">
    <location>
        <begin position="16"/>
        <end position="21"/>
    </location>
    <ligand>
        <name>GTP</name>
        <dbReference type="ChEBI" id="CHEBI:37565"/>
    </ligand>
</feature>
<feature type="binding site" evidence="1">
    <location>
        <begin position="133"/>
        <end position="136"/>
    </location>
    <ligand>
        <name>GTP</name>
        <dbReference type="ChEBI" id="CHEBI:37565"/>
    </ligand>
</feature>
<sequence>MSQSATRNFCIIAHIDHGKSTLADRLIEMTGTLRHDEMCEQVMDSMELERERGITIKAKAIRLRYLSKDSHEYRLNLIDTPGHVDFSYEVSRTIAACEGAILVIDATQGIQAQTLANVYLAIEYNLEIIPVINKIDLPGADIPRVMGEIKSVLGYDEDAVIQISAKLGLGVPELLEAIVARVPAPKGDGKLPLRALIFDSHYDPYKGVVAYLRVADGNINKGDDLRLMGQGTEFKVLEAGYFAPAQVAALRLDVGDVGYVATGLKSVGECRVGDTVTLQHGGAIQPLIGYHPAKAMVFAGIYPTQTDDYHELREAMEKLSLNDASLSYEPESSPLLGHGFRCGFLGLLHLDIIVERLEREFNLSLVVTSPGVSLTVTRTSGEVLTVVNPNEMPLPHEIASIEEPWVSVVIITPSKYIGTVMDLVRENYGVYKNTEYLGQLAMSELGQRVQLHYDMPLRSILTTFHDQLKSRTQGYASLDYEFVGYRIANLSKIDVLVNDVAVDAFSRIIPPDKAHEIGEALVKKLKEMIPRQLYQVTLQAAIGSKIVARADISAKRKDVIAKCYGGDITRKRKLLDKQKEGKKKMRQIGKVEVPKEAFLSVLKLQ</sequence>